<organism>
    <name type="scientific">Penicillium canescens</name>
    <dbReference type="NCBI Taxonomy" id="5083"/>
    <lineage>
        <taxon>Eukaryota</taxon>
        <taxon>Fungi</taxon>
        <taxon>Dikarya</taxon>
        <taxon>Ascomycota</taxon>
        <taxon>Pezizomycotina</taxon>
        <taxon>Eurotiomycetes</taxon>
        <taxon>Eurotiomycetidae</taxon>
        <taxon>Eurotiales</taxon>
        <taxon>Aspergillaceae</taxon>
        <taxon>Penicillium</taxon>
    </lineage>
</organism>
<name>OLCJ_PENCN</name>
<dbReference type="EC" id="1.-.-.-" evidence="3"/>
<dbReference type="SMR" id="P9WEQ9"/>
<dbReference type="UniPathway" id="UPA00213"/>
<dbReference type="GO" id="GO:0016020">
    <property type="term" value="C:membrane"/>
    <property type="evidence" value="ECO:0007669"/>
    <property type="project" value="UniProtKB-SubCell"/>
</dbReference>
<dbReference type="GO" id="GO:0020037">
    <property type="term" value="F:heme binding"/>
    <property type="evidence" value="ECO:0007669"/>
    <property type="project" value="InterPro"/>
</dbReference>
<dbReference type="GO" id="GO:0005506">
    <property type="term" value="F:iron ion binding"/>
    <property type="evidence" value="ECO:0007669"/>
    <property type="project" value="InterPro"/>
</dbReference>
<dbReference type="GO" id="GO:0004497">
    <property type="term" value="F:monooxygenase activity"/>
    <property type="evidence" value="ECO:0007669"/>
    <property type="project" value="UniProtKB-KW"/>
</dbReference>
<dbReference type="GO" id="GO:0016705">
    <property type="term" value="F:oxidoreductase activity, acting on paired donors, with incorporation or reduction of molecular oxygen"/>
    <property type="evidence" value="ECO:0007669"/>
    <property type="project" value="InterPro"/>
</dbReference>
<dbReference type="GO" id="GO:0043386">
    <property type="term" value="P:mycotoxin biosynthetic process"/>
    <property type="evidence" value="ECO:0007669"/>
    <property type="project" value="UniProtKB-ARBA"/>
</dbReference>
<dbReference type="GO" id="GO:0016114">
    <property type="term" value="P:terpenoid biosynthetic process"/>
    <property type="evidence" value="ECO:0007669"/>
    <property type="project" value="UniProtKB-UniPathway"/>
</dbReference>
<dbReference type="CDD" id="cd11041">
    <property type="entry name" value="CYP503A1-like"/>
    <property type="match status" value="1"/>
</dbReference>
<dbReference type="Gene3D" id="1.10.630.10">
    <property type="entry name" value="Cytochrome P450"/>
    <property type="match status" value="1"/>
</dbReference>
<dbReference type="InterPro" id="IPR001128">
    <property type="entry name" value="Cyt_P450"/>
</dbReference>
<dbReference type="InterPro" id="IPR002403">
    <property type="entry name" value="Cyt_P450_E_grp-IV"/>
</dbReference>
<dbReference type="InterPro" id="IPR036396">
    <property type="entry name" value="Cyt_P450_sf"/>
</dbReference>
<dbReference type="PANTHER" id="PTHR46206">
    <property type="entry name" value="CYTOCHROME P450"/>
    <property type="match status" value="1"/>
</dbReference>
<dbReference type="PANTHER" id="PTHR46206:SF6">
    <property type="entry name" value="CYTOCHROME P450 MONOOXYGENASE AN1598-RELATED"/>
    <property type="match status" value="1"/>
</dbReference>
<dbReference type="Pfam" id="PF00067">
    <property type="entry name" value="p450"/>
    <property type="match status" value="1"/>
</dbReference>
<dbReference type="PRINTS" id="PR00465">
    <property type="entry name" value="EP450IV"/>
</dbReference>
<dbReference type="PRINTS" id="PR00385">
    <property type="entry name" value="P450"/>
</dbReference>
<dbReference type="SUPFAM" id="SSF48264">
    <property type="entry name" value="Cytochrome P450"/>
    <property type="match status" value="1"/>
</dbReference>
<sequence>MDPNTWSADLFQLASQWQEKGLLTRYNVFMAISITVTALYLIHKGISRARSFRAPLVGRRFSWEPKWLIGLRFSQYGLEHLMEGCKRFNDGIFKVARNDTDILVIPNRYVDELHSKPEEHISAIKAHMKNLLGKYSTIDILQEGNLHTHVLQTKLTPNLGSLMSTIEEELRFAMTEEIPSTHEDWKDVSIYDIILHLVARISARVFVGQPTCRNQEWLDTSIRFTEHAFLTLAILRRLPKFLHPIVAPLLPSYWAVHRDLQTAKRIISPIVKQRTADEASGEPGYKKPTDLLQWMIDVASPRDGQPDKLAHRQLVLSLAAIHTTTMAVAYAIYDLCQFPEYVEPLRQEITDSLEQDGKWAKTTLTKMHKLDSFIKESQRLSPPSLLSFQRIVMQEVTLSDGTALPKGTHISVPAAEVLQGKAFDSSFDGFRYSRRRQNSGEAHKYQFATTDKNSLHFGHGKYACPGRFFAAYEIKMIISHLLMDYDFRFPPGTSRPKVFSADEVLLPDPSTRVLMHRRTDSAHSNCH</sequence>
<feature type="chain" id="PRO_0000453888" description="Cytochrome P450 monooxygenase olcJ">
    <location>
        <begin position="1"/>
        <end position="527"/>
    </location>
</feature>
<feature type="transmembrane region" description="Helical" evidence="2">
    <location>
        <begin position="21"/>
        <end position="43"/>
    </location>
</feature>
<feature type="binding site" description="axial binding residue" evidence="1">
    <location>
        <position position="464"/>
    </location>
    <ligand>
        <name>heme</name>
        <dbReference type="ChEBI" id="CHEBI:30413"/>
    </ligand>
    <ligandPart>
        <name>Fe</name>
        <dbReference type="ChEBI" id="CHEBI:18248"/>
    </ligandPart>
</feature>
<evidence type="ECO:0000250" key="1">
    <source>
        <dbReference type="UniProtKB" id="P04798"/>
    </source>
</evidence>
<evidence type="ECO:0000255" key="2"/>
<evidence type="ECO:0000269" key="3">
    <source>
    </source>
</evidence>
<evidence type="ECO:0000303" key="4">
    <source>
    </source>
</evidence>
<evidence type="ECO:0000305" key="5"/>
<evidence type="ECO:0000305" key="6">
    <source>
    </source>
</evidence>
<reference key="1">
    <citation type="journal article" date="2015" name="Chem. Sci.">
        <title>Genome mining and molecular characterization of the biosynthetic gene cluster of a diterpenic meroterpenoid, 15-deoxyoxalicine B, in Penicillium canescens.</title>
        <authorList>
            <person name="Yaegashi J."/>
            <person name="Romsdahl J."/>
            <person name="Chiang Y.M."/>
            <person name="Wang C.C.C."/>
        </authorList>
    </citation>
    <scope>FUNCTION</scope>
    <scope>DISRUPTION PHENOTYPE</scope>
    <scope>PATHWAY</scope>
</reference>
<reference key="2">
    <citation type="journal article" date="2016" name="Chem. Sci.">
        <title>Correction: Genome mining and molecular characterization of the biosynthetic gene cluster of a diterpenic meroterpenoid, 15-deoxyoxalicine B, in Penicillium canescens.</title>
        <authorList>
            <person name="Yaegashi J."/>
            <person name="Romsdahl J."/>
            <person name="Chiang Y.M."/>
            <person name="Wang C.C.C."/>
        </authorList>
    </citation>
    <scope>ERRATUM OF PUBMED:30090271</scope>
</reference>
<accession>P9WEQ9</accession>
<keyword id="KW-0349">Heme</keyword>
<keyword id="KW-0408">Iron</keyword>
<keyword id="KW-0472">Membrane</keyword>
<keyword id="KW-0479">Metal-binding</keyword>
<keyword id="KW-0503">Monooxygenase</keyword>
<keyword id="KW-0560">Oxidoreductase</keyword>
<keyword id="KW-0812">Transmembrane</keyword>
<keyword id="KW-1133">Transmembrane helix</keyword>
<proteinExistence type="inferred from homology"/>
<protein>
    <recommendedName>
        <fullName evidence="4">Cytochrome P450 monooxygenase olcJ</fullName>
        <ecNumber evidence="3">1.-.-.-</ecNumber>
    </recommendedName>
    <alternativeName>
        <fullName evidence="4">15-deoxyoxalicine B biosynthesis cluster protein J</fullName>
    </alternativeName>
</protein>
<comment type="function">
    <text evidence="3 6">Cytochrome P450 monooxygenase; part of the gene cluster that mediates the biosynthesis of 15-deoxyoxalicine B (PubMed:30090271). The first step of the pathway is the synthesis of nicotinyl-CoA from nicotinic acid by the nicotinic acid-CoA ligase olcI (PubMed:30090271). Nicotinyl-CoA is then a substrate of polyketide synthase olcA to produce 4-hydroxy-6-(3-pyridinyl)-2H-pyran-2-one (HPPO) which is further prenylated by the polyprenyl transferase olcH to yield geranylgeranyl-HPPO (PubMed:30090271). Geranylgeranyl pyrophosphate is provided by the cluster-specific geranylgeranyl pyrophosphate synthase olcC (PubMed:30090271). The FAD-dependent monooxygenase olcE catalyzes the epoxidation of geranylgeranyl-HPPO and the terpene cyclase olcD catalyzes the cyclization of the terpenoid component, resulting in the formation of the tricyclic terpene moiety seen in predecaturin E (PubMed:30090271). The cytochrome P450 monooxygenase then catalyzes the allylic oxidation of predecaturin E, which is followed by spirocylization with concomitant loss of one molecule of water to form decaturin E (PubMed:30090271). Decaturin E is the substrate of the cytochrome P450 monooxygenase olcJ which hydroxylates it at the C-29 position to form decaturin F (PubMed:30090271). The short-chain dehydrogenase/reductase olcF may catalyze the oxidation of decaturin F to generate the 29-hydroxyl-27-one intermediate, and subsequent hemiacetal formation probably leads to the formation of decaturin C (Probable). The dioxygenase olcK may be a peroxisomal enzyme that catalyzes the hydroxylation of decaturin C into decaturin A once decaturin C is shuttled into the peroxisome by the MFS transporter olcL (Probable). Finally the cytochrome P450 monooxygenase olcB catalyzes the oxidative rearrangement to yield 15-deoxyoxalicine B (PubMed:30090271). In the absence of olcJ, decaturin E may be shunted to a pathway in which it is oxidized to a ketone, possibly by olcF, to form decaturin D, which undergoes further allylic oxidation to yield decaturin G (PubMed:30090271). Moreover, in the absence of oclK or oclL, oclB can convert decaturin C into 15-deoxyoxalicine A (PubMed:30090271).</text>
</comment>
<comment type="cofactor">
    <cofactor evidence="1">
        <name>heme</name>
        <dbReference type="ChEBI" id="CHEBI:30413"/>
    </cofactor>
</comment>
<comment type="pathway">
    <text evidence="3">Secondary metabolite biosynthesis; terpenoid biosynthesis.</text>
</comment>
<comment type="subcellular location">
    <subcellularLocation>
        <location evidence="2">Membrane</location>
        <topology evidence="2">Single-pass membrane protein</topology>
    </subcellularLocation>
</comment>
<comment type="disruption phenotype">
    <text evidence="3">Abolishes the production of 15-deoxyoxalicine B and accumulates decaturin D and decaturin G.</text>
</comment>
<comment type="miscellaneous">
    <text evidence="3">The 15-deoxyoxalicine B cluster is a rare cluster that contains its own geranylgeranyl pyrophosphate synthase (olcC), in contrast to other related clusters which rely on a FPP/GGPP synthase localized outside of the cluster.</text>
</comment>
<comment type="similarity">
    <text evidence="5">Belongs to the cytochrome P450 family.</text>
</comment>
<gene>
    <name evidence="4" type="primary">olcJ</name>
</gene>